<reference key="1">
    <citation type="journal article" date="1989" name="Nucleic Acids Res.">
        <title>Expression of Hox-2.4 homeobox gene directed by proviral insertion in a myeloid leukemia.</title>
        <authorList>
            <person name="Kongsuan K."/>
            <person name="Allen J."/>
            <person name="Adams J.M."/>
        </authorList>
    </citation>
    <scope>NUCLEOTIDE SEQUENCE [MRNA]</scope>
    <source>
        <strain>BALB/cJ</strain>
    </source>
</reference>
<reference key="2">
    <citation type="journal article" date="1988" name="EMBO J.">
        <title>DNA rearrangement of a homeobox gene in myeloid leukaemic cells.</title>
        <authorList>
            <person name="Blatt C."/>
            <person name="Aberdam D."/>
            <person name="Schwartz R."/>
            <person name="Sachs L."/>
        </authorList>
    </citation>
    <scope>NUCLEOTIDE SEQUENCE</scope>
    <source>
        <strain>BALB/cJ</strain>
    </source>
</reference>
<reference key="3">
    <citation type="submission" date="1989-07" db="EMBL/GenBank/DDBJ databases">
        <authorList>
            <person name="Blatt C."/>
        </authorList>
    </citation>
    <scope>SEQUENCE REVISION</scope>
</reference>
<reference key="4">
    <citation type="journal article" date="1991" name="Virology">
        <title>A deletion and a rearrangement distinguish between the intracisternal A- particle of Hox-2.4 and that of interleukin-3 in the same leukemic cells.</title>
        <authorList>
            <person name="Ben-David L."/>
            <person name="Aberdam D."/>
            <person name="Sachs L."/>
            <person name="Blatt C."/>
        </authorList>
    </citation>
    <scope>NUCLEOTIDE SEQUENCE [GENOMIC DNA]</scope>
</reference>
<reference key="5">
    <citation type="journal article" date="1987" name="Genomics">
        <title>Sequence analysis of the murine Hox-2.2, -2.3, and -2.4 homeo boxes: evolutionary and structural comparisons.</title>
        <authorList>
            <person name="Hart C.P."/>
            <person name="Fainsod A."/>
            <person name="Ruddle F.H."/>
        </authorList>
    </citation>
    <scope>NUCLEOTIDE SEQUENCE OF 144-243</scope>
</reference>
<reference key="6">
    <citation type="journal article" date="1995" name="Mol. Cell. Biol.">
        <title>Both Pbx1 and E2A-Pbx1 bind the DNA motif ATCAATCAA cooperatively with the products of multiple murine Hox genes, some of which are themselves oncogenes.</title>
        <authorList>
            <person name="Lu Q."/>
            <person name="Knoepfler P.S."/>
            <person name="Scheele J."/>
            <person name="Wright D.D."/>
            <person name="Kamps M.P."/>
        </authorList>
    </citation>
    <scope>INTERACTION WITH PBX1</scope>
</reference>
<gene>
    <name type="primary">Hoxb8</name>
    <name type="synonym">Hox-2.4</name>
    <name type="synonym">Hoxb-8</name>
</gene>
<keyword id="KW-0217">Developmental protein</keyword>
<keyword id="KW-0238">DNA-binding</keyword>
<keyword id="KW-0371">Homeobox</keyword>
<keyword id="KW-0539">Nucleus</keyword>
<keyword id="KW-1185">Reference proteome</keyword>
<keyword id="KW-0804">Transcription</keyword>
<keyword id="KW-0805">Transcription regulation</keyword>
<protein>
    <recommendedName>
        <fullName>Homeobox protein Hox-B8</fullName>
    </recommendedName>
    <alternativeName>
        <fullName>Homeobox protein Hox-2.4</fullName>
    </alternativeName>
</protein>
<proteinExistence type="evidence at protein level"/>
<organism>
    <name type="scientific">Mus musculus</name>
    <name type="common">Mouse</name>
    <dbReference type="NCBI Taxonomy" id="10090"/>
    <lineage>
        <taxon>Eukaryota</taxon>
        <taxon>Metazoa</taxon>
        <taxon>Chordata</taxon>
        <taxon>Craniata</taxon>
        <taxon>Vertebrata</taxon>
        <taxon>Euteleostomi</taxon>
        <taxon>Mammalia</taxon>
        <taxon>Eutheria</taxon>
        <taxon>Euarchontoglires</taxon>
        <taxon>Glires</taxon>
        <taxon>Rodentia</taxon>
        <taxon>Myomorpha</taxon>
        <taxon>Muroidea</taxon>
        <taxon>Muridae</taxon>
        <taxon>Murinae</taxon>
        <taxon>Mus</taxon>
        <taxon>Mus</taxon>
    </lineage>
</organism>
<accession>P09632</accession>
<evidence type="ECO:0000255" key="1">
    <source>
        <dbReference type="PROSITE-ProRule" id="PRU00108"/>
    </source>
</evidence>
<evidence type="ECO:0000256" key="2">
    <source>
        <dbReference type="SAM" id="MobiDB-lite"/>
    </source>
</evidence>
<evidence type="ECO:0000269" key="3">
    <source>
    </source>
</evidence>
<evidence type="ECO:0000305" key="4"/>
<sequence>MSSYFVNSLFSKYKTGESLRPNYYDCGFAQDLGGRPTVVYGPSSGGSFQHPSQIQEFYHGPSSLSTAPYQQNPCAVACHGDPGNFYGYDPLQRQSLFGAQDPDLVQYADCKLAAASGLGEEAEGSEQSPSPTQLFPWMRPQAAAGRRRGRQTYSRYQTLELEKEFLFNPYLTRKRRIEVSHALGLTERQVKIWFQNRRMKWKKENNKDKFPSSKCEQEELEKEKLERAPETAEQGDAQKGDKK</sequence>
<feature type="chain" id="PRO_0000200149" description="Homeobox protein Hox-B8">
    <location>
        <begin position="1"/>
        <end position="243"/>
    </location>
</feature>
<feature type="DNA-binding region" description="Homeobox" evidence="1">
    <location>
        <begin position="146"/>
        <end position="205"/>
    </location>
</feature>
<feature type="region of interest" description="Disordered" evidence="2">
    <location>
        <begin position="203"/>
        <end position="243"/>
    </location>
</feature>
<feature type="short sequence motif" description="Antp-type hexapeptide">
    <location>
        <begin position="134"/>
        <end position="139"/>
    </location>
</feature>
<comment type="function">
    <text>Sequence-specific transcription factor which is part of a developmental regulatory system that provides cells with specific positional identities on the anterior-posterior axis.</text>
</comment>
<comment type="subunit">
    <text evidence="3">Forms a DNA-binding heterodimer with transcription factor PBX1.</text>
</comment>
<comment type="interaction">
    <interactant intactId="EBI-925374">
        <id>P09632</id>
    </interactant>
    <interactant intactId="EBI-6996259">
        <id>P41778</id>
        <label>Pbx1</label>
    </interactant>
    <organismsDiffer>false</organismsDiffer>
    <experiments>4</experiments>
</comment>
<comment type="subcellular location">
    <subcellularLocation>
        <location>Nucleus</location>
    </subcellularLocation>
</comment>
<comment type="similarity">
    <text evidence="4">Belongs to the Antp homeobox family.</text>
</comment>
<dbReference type="EMBL" id="X13961">
    <property type="protein sequence ID" value="CAA32141.1"/>
    <property type="molecule type" value="Genomic_DNA"/>
</dbReference>
<dbReference type="EMBL" id="X13721">
    <property type="protein sequence ID" value="CAA32000.1"/>
    <property type="molecule type" value="mRNA"/>
</dbReference>
<dbReference type="EMBL" id="M18399">
    <property type="protein sequence ID" value="AAA88246.1"/>
    <property type="status" value="ALT_SEQ"/>
    <property type="molecule type" value="Genomic_DNA"/>
</dbReference>
<dbReference type="EMBL" id="X54077">
    <property type="protein sequence ID" value="CAA38014.1"/>
    <property type="molecule type" value="Genomic_DNA"/>
</dbReference>
<dbReference type="CCDS" id="CCDS25293.1"/>
<dbReference type="PIR" id="S03712">
    <property type="entry name" value="WJMS24"/>
</dbReference>
<dbReference type="RefSeq" id="NP_034591.1">
    <property type="nucleotide sequence ID" value="NM_010461.2"/>
</dbReference>
<dbReference type="RefSeq" id="XP_017169784.1">
    <property type="nucleotide sequence ID" value="XM_017314295.2"/>
</dbReference>
<dbReference type="RefSeq" id="XP_017169785.1">
    <property type="nucleotide sequence ID" value="XM_017314296.2"/>
</dbReference>
<dbReference type="RefSeq" id="XP_017169786.1">
    <property type="nucleotide sequence ID" value="XM_017314297.2"/>
</dbReference>
<dbReference type="SMR" id="P09632"/>
<dbReference type="BioGRID" id="200382">
    <property type="interactions" value="14"/>
</dbReference>
<dbReference type="CORUM" id="P09632"/>
<dbReference type="DIP" id="DIP-35618N"/>
<dbReference type="FunCoup" id="P09632">
    <property type="interactions" value="1350"/>
</dbReference>
<dbReference type="IntAct" id="P09632">
    <property type="interactions" value="15"/>
</dbReference>
<dbReference type="STRING" id="10090.ENSMUSP00000052496"/>
<dbReference type="iPTMnet" id="P09632"/>
<dbReference type="PhosphoSitePlus" id="P09632"/>
<dbReference type="PaxDb" id="10090-ENSMUSP00000052496"/>
<dbReference type="ProteomicsDB" id="273231"/>
<dbReference type="Antibodypedia" id="30298">
    <property type="antibodies" value="212 antibodies from 27 providers"/>
</dbReference>
<dbReference type="DNASU" id="15416"/>
<dbReference type="Ensembl" id="ENSMUST00000052650.4">
    <property type="protein sequence ID" value="ENSMUSP00000052496.3"/>
    <property type="gene ID" value="ENSMUSG00000056648.7"/>
</dbReference>
<dbReference type="GeneID" id="15416"/>
<dbReference type="KEGG" id="mmu:15416"/>
<dbReference type="UCSC" id="uc007lbp.1">
    <property type="organism name" value="mouse"/>
</dbReference>
<dbReference type="AGR" id="MGI:96189"/>
<dbReference type="CTD" id="3218"/>
<dbReference type="MGI" id="MGI:96189">
    <property type="gene designation" value="Hoxb8"/>
</dbReference>
<dbReference type="VEuPathDB" id="HostDB:ENSMUSG00000056648"/>
<dbReference type="eggNOG" id="KOG0489">
    <property type="taxonomic scope" value="Eukaryota"/>
</dbReference>
<dbReference type="GeneTree" id="ENSGT00940000161529"/>
<dbReference type="HOGENOM" id="CLU_061398_1_0_1"/>
<dbReference type="InParanoid" id="P09632"/>
<dbReference type="OMA" id="SEDCCEK"/>
<dbReference type="OrthoDB" id="6159439at2759"/>
<dbReference type="PhylomeDB" id="P09632"/>
<dbReference type="TreeFam" id="TF316310"/>
<dbReference type="BioGRID-ORCS" id="15416">
    <property type="hits" value="1 hit in 81 CRISPR screens"/>
</dbReference>
<dbReference type="PRO" id="PR:P09632"/>
<dbReference type="Proteomes" id="UP000000589">
    <property type="component" value="Chromosome 11"/>
</dbReference>
<dbReference type="RNAct" id="P09632">
    <property type="molecule type" value="protein"/>
</dbReference>
<dbReference type="Bgee" id="ENSMUSG00000056648">
    <property type="expression patterns" value="Expressed in lumbar subsegment of spinal cord and 108 other cell types or tissues"/>
</dbReference>
<dbReference type="ExpressionAtlas" id="P09632">
    <property type="expression patterns" value="baseline and differential"/>
</dbReference>
<dbReference type="GO" id="GO:0005654">
    <property type="term" value="C:nucleoplasm"/>
    <property type="evidence" value="ECO:0007669"/>
    <property type="project" value="Ensembl"/>
</dbReference>
<dbReference type="GO" id="GO:0001227">
    <property type="term" value="F:DNA-binding transcription repressor activity, RNA polymerase II-specific"/>
    <property type="evidence" value="ECO:0000314"/>
    <property type="project" value="NTNU_SB"/>
</dbReference>
<dbReference type="GO" id="GO:0043565">
    <property type="term" value="F:sequence-specific DNA binding"/>
    <property type="evidence" value="ECO:0000315"/>
    <property type="project" value="NTNU_SB"/>
</dbReference>
<dbReference type="GO" id="GO:1990837">
    <property type="term" value="F:sequence-specific double-stranded DNA binding"/>
    <property type="evidence" value="ECO:0007669"/>
    <property type="project" value="Ensembl"/>
</dbReference>
<dbReference type="GO" id="GO:0008344">
    <property type="term" value="P:adult locomotory behavior"/>
    <property type="evidence" value="ECO:0000315"/>
    <property type="project" value="MGI"/>
</dbReference>
<dbReference type="GO" id="GO:0009952">
    <property type="term" value="P:anterior/posterior pattern specification"/>
    <property type="evidence" value="ECO:0000315"/>
    <property type="project" value="MGI"/>
</dbReference>
<dbReference type="GO" id="GO:0021516">
    <property type="term" value="P:dorsal spinal cord development"/>
    <property type="evidence" value="ECO:0000315"/>
    <property type="project" value="MGI"/>
</dbReference>
<dbReference type="GO" id="GO:0048704">
    <property type="term" value="P:embryonic skeletal system morphogenesis"/>
    <property type="evidence" value="ECO:0000315"/>
    <property type="project" value="MGI"/>
</dbReference>
<dbReference type="GO" id="GO:0007625">
    <property type="term" value="P:grooming behavior"/>
    <property type="evidence" value="ECO:0000315"/>
    <property type="project" value="MGI"/>
</dbReference>
<dbReference type="GO" id="GO:0045638">
    <property type="term" value="P:negative regulation of myeloid cell differentiation"/>
    <property type="evidence" value="ECO:0000314"/>
    <property type="project" value="UniProtKB"/>
</dbReference>
<dbReference type="GO" id="GO:0000122">
    <property type="term" value="P:negative regulation of transcription by RNA polymerase II"/>
    <property type="evidence" value="ECO:0000314"/>
    <property type="project" value="NTNU_SB"/>
</dbReference>
<dbReference type="GO" id="GO:0019233">
    <property type="term" value="P:sensory perception of pain"/>
    <property type="evidence" value="ECO:0000315"/>
    <property type="project" value="MGI"/>
</dbReference>
<dbReference type="GO" id="GO:0048705">
    <property type="term" value="P:skeletal system morphogenesis"/>
    <property type="evidence" value="ECO:0000315"/>
    <property type="project" value="MGI"/>
</dbReference>
<dbReference type="CDD" id="cd00086">
    <property type="entry name" value="homeodomain"/>
    <property type="match status" value="1"/>
</dbReference>
<dbReference type="FunFam" id="1.10.10.60:FF:000072">
    <property type="entry name" value="Homeobox protein Hox-B8"/>
    <property type="match status" value="1"/>
</dbReference>
<dbReference type="Gene3D" id="1.10.10.60">
    <property type="entry name" value="Homeodomain-like"/>
    <property type="match status" value="1"/>
</dbReference>
<dbReference type="InterPro" id="IPR050948">
    <property type="entry name" value="Antp_homeobox_TF"/>
</dbReference>
<dbReference type="InterPro" id="IPR001356">
    <property type="entry name" value="HD"/>
</dbReference>
<dbReference type="InterPro" id="IPR020479">
    <property type="entry name" value="HD_metazoa"/>
</dbReference>
<dbReference type="InterPro" id="IPR001827">
    <property type="entry name" value="Homeobox_Antennapedia_CS"/>
</dbReference>
<dbReference type="InterPro" id="IPR017970">
    <property type="entry name" value="Homeobox_CS"/>
</dbReference>
<dbReference type="InterPro" id="IPR009057">
    <property type="entry name" value="Homeodomain-like_sf"/>
</dbReference>
<dbReference type="InterPro" id="IPR000047">
    <property type="entry name" value="HTH_motif"/>
</dbReference>
<dbReference type="PANTHER" id="PTHR46166">
    <property type="entry name" value="HOMEOBOX DOMAIN-CONTAINING PROTEIN"/>
    <property type="match status" value="1"/>
</dbReference>
<dbReference type="PANTHER" id="PTHR46166:SF2">
    <property type="entry name" value="HOMEOBOX PROTEIN HOX-B8"/>
    <property type="match status" value="1"/>
</dbReference>
<dbReference type="Pfam" id="PF00046">
    <property type="entry name" value="Homeodomain"/>
    <property type="match status" value="1"/>
</dbReference>
<dbReference type="PRINTS" id="PR00024">
    <property type="entry name" value="HOMEOBOX"/>
</dbReference>
<dbReference type="PRINTS" id="PR00031">
    <property type="entry name" value="HTHREPRESSR"/>
</dbReference>
<dbReference type="SMART" id="SM00389">
    <property type="entry name" value="HOX"/>
    <property type="match status" value="1"/>
</dbReference>
<dbReference type="SUPFAM" id="SSF46689">
    <property type="entry name" value="Homeodomain-like"/>
    <property type="match status" value="1"/>
</dbReference>
<dbReference type="PROSITE" id="PS00032">
    <property type="entry name" value="ANTENNAPEDIA"/>
    <property type="match status" value="1"/>
</dbReference>
<dbReference type="PROSITE" id="PS00027">
    <property type="entry name" value="HOMEOBOX_1"/>
    <property type="match status" value="1"/>
</dbReference>
<dbReference type="PROSITE" id="PS50071">
    <property type="entry name" value="HOMEOBOX_2"/>
    <property type="match status" value="1"/>
</dbReference>
<name>HXB8_MOUSE</name>